<keyword id="KW-0131">Cell cycle</keyword>
<keyword id="KW-0132">Cell division</keyword>
<keyword id="KW-0133">Cell shape</keyword>
<keyword id="KW-0961">Cell wall biogenesis/degradation</keyword>
<keyword id="KW-0963">Cytoplasm</keyword>
<keyword id="KW-0573">Peptidoglycan synthesis</keyword>
<keyword id="KW-0670">Pyruvate</keyword>
<keyword id="KW-1185">Reference proteome</keyword>
<keyword id="KW-0808">Transferase</keyword>
<proteinExistence type="inferred from homology"/>
<comment type="function">
    <text evidence="1">Cell wall formation. Adds enolpyruvyl to UDP-N-acetylglucosamine.</text>
</comment>
<comment type="catalytic activity">
    <reaction evidence="1">
        <text>phosphoenolpyruvate + UDP-N-acetyl-alpha-D-glucosamine = UDP-N-acetyl-3-O-(1-carboxyvinyl)-alpha-D-glucosamine + phosphate</text>
        <dbReference type="Rhea" id="RHEA:18681"/>
        <dbReference type="ChEBI" id="CHEBI:43474"/>
        <dbReference type="ChEBI" id="CHEBI:57705"/>
        <dbReference type="ChEBI" id="CHEBI:58702"/>
        <dbReference type="ChEBI" id="CHEBI:68483"/>
        <dbReference type="EC" id="2.5.1.7"/>
    </reaction>
</comment>
<comment type="pathway">
    <text evidence="1">Cell wall biogenesis; peptidoglycan biosynthesis.</text>
</comment>
<comment type="subcellular location">
    <subcellularLocation>
        <location evidence="1">Cytoplasm</location>
    </subcellularLocation>
</comment>
<comment type="similarity">
    <text evidence="1">Belongs to the EPSP synthase family. MurA subfamily.</text>
</comment>
<sequence length="419" mass="44750">MDKLTIQASKPLTGSVVISGAKNAALPILMAGVLAETDFVLSNVPELRDVSTSCKLLRCLGAEVDELGGGRIRISTTNLNEFCAPYDLVKTMRASILILGPLLARFGTADVSLPGGCAIGARPVNLHLHGLEQMGAKIEVKEGYIKARVDGRLKGAHIFMDMISVGATENLLMAAALADGITIIENAAQEPEVTDLAHCLIAMGAKITGVGTATLKIEGVERLQGCEYRVMPDRIETGTFLVAAAVTRGRIRCENADPASMEAVLAKLEDAGATVTSGEDWIELDMHGKQPKAVNIKTAPYPAFPTDMQAQFCVLNALAQGTGRVTETIFENRFMHVPELIRMGANMELEGHTCIIQGIDKLNGAQVMATDLRASASLVIAGLMAEGTTLVDRIYHLDRGYEHIESKFQGLGAEVIRVK</sequence>
<name>MURA_SHEDO</name>
<accession>Q12RY2</accession>
<dbReference type="EC" id="2.5.1.7" evidence="1"/>
<dbReference type="EMBL" id="CP000302">
    <property type="protein sequence ID" value="ABE53794.1"/>
    <property type="molecule type" value="Genomic_DNA"/>
</dbReference>
<dbReference type="RefSeq" id="WP_011494960.1">
    <property type="nucleotide sequence ID" value="NC_007954.1"/>
</dbReference>
<dbReference type="SMR" id="Q12RY2"/>
<dbReference type="STRING" id="318161.Sden_0502"/>
<dbReference type="KEGG" id="sdn:Sden_0502"/>
<dbReference type="eggNOG" id="COG0766">
    <property type="taxonomic scope" value="Bacteria"/>
</dbReference>
<dbReference type="HOGENOM" id="CLU_027387_0_0_6"/>
<dbReference type="OrthoDB" id="9803760at2"/>
<dbReference type="UniPathway" id="UPA00219"/>
<dbReference type="Proteomes" id="UP000001982">
    <property type="component" value="Chromosome"/>
</dbReference>
<dbReference type="GO" id="GO:0005737">
    <property type="term" value="C:cytoplasm"/>
    <property type="evidence" value="ECO:0007669"/>
    <property type="project" value="UniProtKB-SubCell"/>
</dbReference>
<dbReference type="GO" id="GO:0008760">
    <property type="term" value="F:UDP-N-acetylglucosamine 1-carboxyvinyltransferase activity"/>
    <property type="evidence" value="ECO:0007669"/>
    <property type="project" value="UniProtKB-UniRule"/>
</dbReference>
<dbReference type="GO" id="GO:0051301">
    <property type="term" value="P:cell division"/>
    <property type="evidence" value="ECO:0007669"/>
    <property type="project" value="UniProtKB-KW"/>
</dbReference>
<dbReference type="GO" id="GO:0071555">
    <property type="term" value="P:cell wall organization"/>
    <property type="evidence" value="ECO:0007669"/>
    <property type="project" value="UniProtKB-KW"/>
</dbReference>
<dbReference type="GO" id="GO:0009252">
    <property type="term" value="P:peptidoglycan biosynthetic process"/>
    <property type="evidence" value="ECO:0007669"/>
    <property type="project" value="UniProtKB-UniRule"/>
</dbReference>
<dbReference type="GO" id="GO:0008360">
    <property type="term" value="P:regulation of cell shape"/>
    <property type="evidence" value="ECO:0007669"/>
    <property type="project" value="UniProtKB-KW"/>
</dbReference>
<dbReference type="GO" id="GO:0019277">
    <property type="term" value="P:UDP-N-acetylgalactosamine biosynthetic process"/>
    <property type="evidence" value="ECO:0007669"/>
    <property type="project" value="InterPro"/>
</dbReference>
<dbReference type="CDD" id="cd01555">
    <property type="entry name" value="UdpNAET"/>
    <property type="match status" value="1"/>
</dbReference>
<dbReference type="FunFam" id="3.65.10.10:FF:000002">
    <property type="entry name" value="UDP-N-acetylglucosamine 1-carboxyvinyltransferase"/>
    <property type="match status" value="1"/>
</dbReference>
<dbReference type="Gene3D" id="3.65.10.10">
    <property type="entry name" value="Enolpyruvate transferase domain"/>
    <property type="match status" value="2"/>
</dbReference>
<dbReference type="HAMAP" id="MF_00111">
    <property type="entry name" value="MurA"/>
    <property type="match status" value="1"/>
</dbReference>
<dbReference type="InterPro" id="IPR001986">
    <property type="entry name" value="Enolpyruvate_Tfrase_dom"/>
</dbReference>
<dbReference type="InterPro" id="IPR036968">
    <property type="entry name" value="Enolpyruvate_Tfrase_sf"/>
</dbReference>
<dbReference type="InterPro" id="IPR050068">
    <property type="entry name" value="MurA_subfamily"/>
</dbReference>
<dbReference type="InterPro" id="IPR013792">
    <property type="entry name" value="RNA3'P_cycl/enolpyr_Trfase_a/b"/>
</dbReference>
<dbReference type="InterPro" id="IPR005750">
    <property type="entry name" value="UDP_GlcNAc_COvinyl_MurA"/>
</dbReference>
<dbReference type="NCBIfam" id="TIGR01072">
    <property type="entry name" value="murA"/>
    <property type="match status" value="1"/>
</dbReference>
<dbReference type="NCBIfam" id="NF006873">
    <property type="entry name" value="PRK09369.1"/>
    <property type="match status" value="1"/>
</dbReference>
<dbReference type="PANTHER" id="PTHR43783">
    <property type="entry name" value="UDP-N-ACETYLGLUCOSAMINE 1-CARBOXYVINYLTRANSFERASE"/>
    <property type="match status" value="1"/>
</dbReference>
<dbReference type="PANTHER" id="PTHR43783:SF1">
    <property type="entry name" value="UDP-N-ACETYLGLUCOSAMINE 1-CARBOXYVINYLTRANSFERASE"/>
    <property type="match status" value="1"/>
</dbReference>
<dbReference type="Pfam" id="PF00275">
    <property type="entry name" value="EPSP_synthase"/>
    <property type="match status" value="1"/>
</dbReference>
<dbReference type="SUPFAM" id="SSF55205">
    <property type="entry name" value="EPT/RTPC-like"/>
    <property type="match status" value="1"/>
</dbReference>
<evidence type="ECO:0000255" key="1">
    <source>
        <dbReference type="HAMAP-Rule" id="MF_00111"/>
    </source>
</evidence>
<feature type="chain" id="PRO_1000023100" description="UDP-N-acetylglucosamine 1-carboxyvinyltransferase">
    <location>
        <begin position="1"/>
        <end position="419"/>
    </location>
</feature>
<feature type="active site" description="Proton donor" evidence="1">
    <location>
        <position position="117"/>
    </location>
</feature>
<feature type="binding site" evidence="1">
    <location>
        <begin position="22"/>
        <end position="23"/>
    </location>
    <ligand>
        <name>phosphoenolpyruvate</name>
        <dbReference type="ChEBI" id="CHEBI:58702"/>
    </ligand>
</feature>
<feature type="binding site" evidence="1">
    <location>
        <position position="93"/>
    </location>
    <ligand>
        <name>UDP-N-acetyl-alpha-D-glucosamine</name>
        <dbReference type="ChEBI" id="CHEBI:57705"/>
    </ligand>
</feature>
<feature type="binding site" evidence="1">
    <location>
        <position position="307"/>
    </location>
    <ligand>
        <name>UDP-N-acetyl-alpha-D-glucosamine</name>
        <dbReference type="ChEBI" id="CHEBI:57705"/>
    </ligand>
</feature>
<feature type="binding site" evidence="1">
    <location>
        <position position="329"/>
    </location>
    <ligand>
        <name>UDP-N-acetyl-alpha-D-glucosamine</name>
        <dbReference type="ChEBI" id="CHEBI:57705"/>
    </ligand>
</feature>
<feature type="modified residue" description="2-(S-cysteinyl)pyruvic acid O-phosphothioketal" evidence="1">
    <location>
        <position position="117"/>
    </location>
</feature>
<protein>
    <recommendedName>
        <fullName evidence="1">UDP-N-acetylglucosamine 1-carboxyvinyltransferase</fullName>
        <ecNumber evidence="1">2.5.1.7</ecNumber>
    </recommendedName>
    <alternativeName>
        <fullName evidence="1">Enoylpyruvate transferase</fullName>
    </alternativeName>
    <alternativeName>
        <fullName evidence="1">UDP-N-acetylglucosamine enolpyruvyl transferase</fullName>
        <shortName evidence="1">EPT</shortName>
    </alternativeName>
</protein>
<reference key="1">
    <citation type="submission" date="2006-03" db="EMBL/GenBank/DDBJ databases">
        <title>Complete sequence of Shewanella denitrificans OS217.</title>
        <authorList>
            <consortium name="US DOE Joint Genome Institute"/>
            <person name="Copeland A."/>
            <person name="Lucas S."/>
            <person name="Lapidus A."/>
            <person name="Barry K."/>
            <person name="Detter J.C."/>
            <person name="Glavina del Rio T."/>
            <person name="Hammon N."/>
            <person name="Israni S."/>
            <person name="Dalin E."/>
            <person name="Tice H."/>
            <person name="Pitluck S."/>
            <person name="Brettin T."/>
            <person name="Bruce D."/>
            <person name="Han C."/>
            <person name="Tapia R."/>
            <person name="Gilna P."/>
            <person name="Kiss H."/>
            <person name="Schmutz J."/>
            <person name="Larimer F."/>
            <person name="Land M."/>
            <person name="Hauser L."/>
            <person name="Kyrpides N."/>
            <person name="Lykidis A."/>
            <person name="Richardson P."/>
        </authorList>
    </citation>
    <scope>NUCLEOTIDE SEQUENCE [LARGE SCALE GENOMIC DNA]</scope>
    <source>
        <strain>OS217 / ATCC BAA-1090 / DSM 15013</strain>
    </source>
</reference>
<gene>
    <name evidence="1" type="primary">murA</name>
    <name type="ordered locus">Sden_0502</name>
</gene>
<organism>
    <name type="scientific">Shewanella denitrificans (strain OS217 / ATCC BAA-1090 / DSM 15013)</name>
    <dbReference type="NCBI Taxonomy" id="318161"/>
    <lineage>
        <taxon>Bacteria</taxon>
        <taxon>Pseudomonadati</taxon>
        <taxon>Pseudomonadota</taxon>
        <taxon>Gammaproteobacteria</taxon>
        <taxon>Alteromonadales</taxon>
        <taxon>Shewanellaceae</taxon>
        <taxon>Shewanella</taxon>
    </lineage>
</organism>